<feature type="chain" id="PRO_1000055967" description="Large ribosomal subunit protein bL17">
    <location>
        <begin position="1"/>
        <end position="128"/>
    </location>
</feature>
<proteinExistence type="inferred from homology"/>
<protein>
    <recommendedName>
        <fullName evidence="1">Large ribosomal subunit protein bL17</fullName>
    </recommendedName>
    <alternativeName>
        <fullName evidence="2">50S ribosomal protein L17</fullName>
    </alternativeName>
</protein>
<comment type="subunit">
    <text evidence="1">Part of the 50S ribosomal subunit. Contacts protein L32.</text>
</comment>
<comment type="similarity">
    <text evidence="1">Belongs to the bacterial ribosomal protein bL17 family.</text>
</comment>
<evidence type="ECO:0000255" key="1">
    <source>
        <dbReference type="HAMAP-Rule" id="MF_01368"/>
    </source>
</evidence>
<evidence type="ECO:0000305" key="2"/>
<sequence>MAYRKLGRTSSQRKAMLRDLTTDLLINESIVTTEARAKEIRKTVEKMITLGKRGDLHARRQAAAFVRNEIASENYDEATDKYTSTTALQKLFSEIAPRYAERNGGYTRILKTESRRGDAAPMAIIELV</sequence>
<gene>
    <name evidence="1" type="primary">rplQ</name>
    <name type="ordered locus">SP_0237</name>
</gene>
<name>RL17_STRPN</name>
<dbReference type="EMBL" id="AE005672">
    <property type="protein sequence ID" value="AAK74417.1"/>
    <property type="molecule type" value="Genomic_DNA"/>
</dbReference>
<dbReference type="PIR" id="H95027">
    <property type="entry name" value="H95027"/>
</dbReference>
<dbReference type="RefSeq" id="WP_000331494.1">
    <property type="nucleotide sequence ID" value="NZ_CP155539.1"/>
</dbReference>
<dbReference type="SMR" id="Q97ST6"/>
<dbReference type="PaxDb" id="170187-SP_0237"/>
<dbReference type="EnsemblBacteria" id="AAK74417">
    <property type="protein sequence ID" value="AAK74417"/>
    <property type="gene ID" value="SP_0237"/>
</dbReference>
<dbReference type="KEGG" id="spn:SP_0237"/>
<dbReference type="eggNOG" id="COG0203">
    <property type="taxonomic scope" value="Bacteria"/>
</dbReference>
<dbReference type="PhylomeDB" id="Q97ST6"/>
<dbReference type="BioCyc" id="SPNE170187:G1FZB-241-MONOMER"/>
<dbReference type="Proteomes" id="UP000000585">
    <property type="component" value="Chromosome"/>
</dbReference>
<dbReference type="GO" id="GO:0022625">
    <property type="term" value="C:cytosolic large ribosomal subunit"/>
    <property type="evidence" value="ECO:0007669"/>
    <property type="project" value="TreeGrafter"/>
</dbReference>
<dbReference type="GO" id="GO:0003735">
    <property type="term" value="F:structural constituent of ribosome"/>
    <property type="evidence" value="ECO:0007669"/>
    <property type="project" value="InterPro"/>
</dbReference>
<dbReference type="GO" id="GO:0006412">
    <property type="term" value="P:translation"/>
    <property type="evidence" value="ECO:0007669"/>
    <property type="project" value="UniProtKB-UniRule"/>
</dbReference>
<dbReference type="FunFam" id="3.90.1030.10:FF:000002">
    <property type="entry name" value="50S ribosomal protein L17"/>
    <property type="match status" value="1"/>
</dbReference>
<dbReference type="Gene3D" id="3.90.1030.10">
    <property type="entry name" value="Ribosomal protein L17"/>
    <property type="match status" value="1"/>
</dbReference>
<dbReference type="HAMAP" id="MF_01368">
    <property type="entry name" value="Ribosomal_bL17"/>
    <property type="match status" value="1"/>
</dbReference>
<dbReference type="InterPro" id="IPR000456">
    <property type="entry name" value="Ribosomal_bL17"/>
</dbReference>
<dbReference type="InterPro" id="IPR047859">
    <property type="entry name" value="Ribosomal_bL17_CS"/>
</dbReference>
<dbReference type="InterPro" id="IPR036373">
    <property type="entry name" value="Ribosomal_bL17_sf"/>
</dbReference>
<dbReference type="NCBIfam" id="TIGR00059">
    <property type="entry name" value="L17"/>
    <property type="match status" value="1"/>
</dbReference>
<dbReference type="PANTHER" id="PTHR14413:SF16">
    <property type="entry name" value="LARGE RIBOSOMAL SUBUNIT PROTEIN BL17M"/>
    <property type="match status" value="1"/>
</dbReference>
<dbReference type="PANTHER" id="PTHR14413">
    <property type="entry name" value="RIBOSOMAL PROTEIN L17"/>
    <property type="match status" value="1"/>
</dbReference>
<dbReference type="Pfam" id="PF01196">
    <property type="entry name" value="Ribosomal_L17"/>
    <property type="match status" value="1"/>
</dbReference>
<dbReference type="SUPFAM" id="SSF64263">
    <property type="entry name" value="Prokaryotic ribosomal protein L17"/>
    <property type="match status" value="1"/>
</dbReference>
<dbReference type="PROSITE" id="PS01167">
    <property type="entry name" value="RIBOSOMAL_L17"/>
    <property type="match status" value="1"/>
</dbReference>
<keyword id="KW-1185">Reference proteome</keyword>
<keyword id="KW-0687">Ribonucleoprotein</keyword>
<keyword id="KW-0689">Ribosomal protein</keyword>
<organism>
    <name type="scientific">Streptococcus pneumoniae serotype 4 (strain ATCC BAA-334 / TIGR4)</name>
    <dbReference type="NCBI Taxonomy" id="170187"/>
    <lineage>
        <taxon>Bacteria</taxon>
        <taxon>Bacillati</taxon>
        <taxon>Bacillota</taxon>
        <taxon>Bacilli</taxon>
        <taxon>Lactobacillales</taxon>
        <taxon>Streptococcaceae</taxon>
        <taxon>Streptococcus</taxon>
    </lineage>
</organism>
<accession>Q97ST6</accession>
<reference key="1">
    <citation type="journal article" date="2001" name="Science">
        <title>Complete genome sequence of a virulent isolate of Streptococcus pneumoniae.</title>
        <authorList>
            <person name="Tettelin H."/>
            <person name="Nelson K.E."/>
            <person name="Paulsen I.T."/>
            <person name="Eisen J.A."/>
            <person name="Read T.D."/>
            <person name="Peterson S.N."/>
            <person name="Heidelberg J.F."/>
            <person name="DeBoy R.T."/>
            <person name="Haft D.H."/>
            <person name="Dodson R.J."/>
            <person name="Durkin A.S."/>
            <person name="Gwinn M.L."/>
            <person name="Kolonay J.F."/>
            <person name="Nelson W.C."/>
            <person name="Peterson J.D."/>
            <person name="Umayam L.A."/>
            <person name="White O."/>
            <person name="Salzberg S.L."/>
            <person name="Lewis M.R."/>
            <person name="Radune D."/>
            <person name="Holtzapple E.K."/>
            <person name="Khouri H.M."/>
            <person name="Wolf A.M."/>
            <person name="Utterback T.R."/>
            <person name="Hansen C.L."/>
            <person name="McDonald L.A."/>
            <person name="Feldblyum T.V."/>
            <person name="Angiuoli S.V."/>
            <person name="Dickinson T."/>
            <person name="Hickey E.K."/>
            <person name="Holt I.E."/>
            <person name="Loftus B.J."/>
            <person name="Yang F."/>
            <person name="Smith H.O."/>
            <person name="Venter J.C."/>
            <person name="Dougherty B.A."/>
            <person name="Morrison D.A."/>
            <person name="Hollingshead S.K."/>
            <person name="Fraser C.M."/>
        </authorList>
    </citation>
    <scope>NUCLEOTIDE SEQUENCE [LARGE SCALE GENOMIC DNA]</scope>
    <source>
        <strain>ATCC BAA-334 / TIGR4</strain>
    </source>
</reference>